<protein>
    <recommendedName>
        <fullName evidence="1">Adenine phosphoribosyltransferase</fullName>
        <shortName evidence="1">APRT</shortName>
        <ecNumber evidence="1">2.4.2.7</ecNumber>
    </recommendedName>
</protein>
<keyword id="KW-0963">Cytoplasm</keyword>
<keyword id="KW-0328">Glycosyltransferase</keyword>
<keyword id="KW-0660">Purine salvage</keyword>
<keyword id="KW-0808">Transferase</keyword>
<name>APT_ACISJ</name>
<proteinExistence type="inferred from homology"/>
<organism>
    <name type="scientific">Acidovorax sp. (strain JS42)</name>
    <dbReference type="NCBI Taxonomy" id="232721"/>
    <lineage>
        <taxon>Bacteria</taxon>
        <taxon>Pseudomonadati</taxon>
        <taxon>Pseudomonadota</taxon>
        <taxon>Betaproteobacteria</taxon>
        <taxon>Burkholderiales</taxon>
        <taxon>Comamonadaceae</taxon>
        <taxon>Acidovorax</taxon>
    </lineage>
</organism>
<feature type="chain" id="PRO_0000321331" description="Adenine phosphoribosyltransferase">
    <location>
        <begin position="1"/>
        <end position="184"/>
    </location>
</feature>
<gene>
    <name evidence="1" type="primary">apt</name>
    <name type="ordered locus">Ajs_4134</name>
</gene>
<comment type="function">
    <text evidence="1">Catalyzes a salvage reaction resulting in the formation of AMP, that is energically less costly than de novo synthesis.</text>
</comment>
<comment type="catalytic activity">
    <reaction evidence="1">
        <text>AMP + diphosphate = 5-phospho-alpha-D-ribose 1-diphosphate + adenine</text>
        <dbReference type="Rhea" id="RHEA:16609"/>
        <dbReference type="ChEBI" id="CHEBI:16708"/>
        <dbReference type="ChEBI" id="CHEBI:33019"/>
        <dbReference type="ChEBI" id="CHEBI:58017"/>
        <dbReference type="ChEBI" id="CHEBI:456215"/>
        <dbReference type="EC" id="2.4.2.7"/>
    </reaction>
</comment>
<comment type="pathway">
    <text evidence="1">Purine metabolism; AMP biosynthesis via salvage pathway; AMP from adenine: step 1/1.</text>
</comment>
<comment type="subunit">
    <text evidence="1">Homodimer.</text>
</comment>
<comment type="subcellular location">
    <subcellularLocation>
        <location evidence="1">Cytoplasm</location>
    </subcellularLocation>
</comment>
<comment type="similarity">
    <text evidence="1">Belongs to the purine/pyrimidine phosphoribosyltransferase family.</text>
</comment>
<dbReference type="EC" id="2.4.2.7" evidence="1"/>
<dbReference type="EMBL" id="CP000539">
    <property type="protein sequence ID" value="ABM44235.1"/>
    <property type="molecule type" value="Genomic_DNA"/>
</dbReference>
<dbReference type="RefSeq" id="WP_011807211.1">
    <property type="nucleotide sequence ID" value="NZ_CP016278.1"/>
</dbReference>
<dbReference type="SMR" id="A1WDB0"/>
<dbReference type="STRING" id="232721.Ajs_4134"/>
<dbReference type="KEGG" id="ajs:Ajs_4134"/>
<dbReference type="eggNOG" id="COG0503">
    <property type="taxonomic scope" value="Bacteria"/>
</dbReference>
<dbReference type="HOGENOM" id="CLU_063339_3_0_4"/>
<dbReference type="UniPathway" id="UPA00588">
    <property type="reaction ID" value="UER00646"/>
</dbReference>
<dbReference type="Proteomes" id="UP000000645">
    <property type="component" value="Chromosome"/>
</dbReference>
<dbReference type="GO" id="GO:0005737">
    <property type="term" value="C:cytoplasm"/>
    <property type="evidence" value="ECO:0007669"/>
    <property type="project" value="UniProtKB-SubCell"/>
</dbReference>
<dbReference type="GO" id="GO:0002055">
    <property type="term" value="F:adenine binding"/>
    <property type="evidence" value="ECO:0007669"/>
    <property type="project" value="TreeGrafter"/>
</dbReference>
<dbReference type="GO" id="GO:0003999">
    <property type="term" value="F:adenine phosphoribosyltransferase activity"/>
    <property type="evidence" value="ECO:0007669"/>
    <property type="project" value="UniProtKB-UniRule"/>
</dbReference>
<dbReference type="GO" id="GO:0016208">
    <property type="term" value="F:AMP binding"/>
    <property type="evidence" value="ECO:0007669"/>
    <property type="project" value="TreeGrafter"/>
</dbReference>
<dbReference type="GO" id="GO:0006168">
    <property type="term" value="P:adenine salvage"/>
    <property type="evidence" value="ECO:0007669"/>
    <property type="project" value="InterPro"/>
</dbReference>
<dbReference type="GO" id="GO:0044209">
    <property type="term" value="P:AMP salvage"/>
    <property type="evidence" value="ECO:0007669"/>
    <property type="project" value="UniProtKB-UniRule"/>
</dbReference>
<dbReference type="GO" id="GO:0006166">
    <property type="term" value="P:purine ribonucleoside salvage"/>
    <property type="evidence" value="ECO:0007669"/>
    <property type="project" value="UniProtKB-KW"/>
</dbReference>
<dbReference type="CDD" id="cd06223">
    <property type="entry name" value="PRTases_typeI"/>
    <property type="match status" value="1"/>
</dbReference>
<dbReference type="FunFam" id="3.40.50.2020:FF:000021">
    <property type="entry name" value="Adenine phosphoribosyltransferase"/>
    <property type="match status" value="1"/>
</dbReference>
<dbReference type="Gene3D" id="3.40.50.2020">
    <property type="match status" value="1"/>
</dbReference>
<dbReference type="HAMAP" id="MF_00004">
    <property type="entry name" value="Aden_phosphoribosyltr"/>
    <property type="match status" value="1"/>
</dbReference>
<dbReference type="InterPro" id="IPR005764">
    <property type="entry name" value="Ade_phspho_trans"/>
</dbReference>
<dbReference type="InterPro" id="IPR000836">
    <property type="entry name" value="PRibTrfase_dom"/>
</dbReference>
<dbReference type="InterPro" id="IPR029057">
    <property type="entry name" value="PRTase-like"/>
</dbReference>
<dbReference type="InterPro" id="IPR050054">
    <property type="entry name" value="UPRTase/APRTase"/>
</dbReference>
<dbReference type="NCBIfam" id="TIGR01090">
    <property type="entry name" value="apt"/>
    <property type="match status" value="1"/>
</dbReference>
<dbReference type="NCBIfam" id="NF002634">
    <property type="entry name" value="PRK02304.1-3"/>
    <property type="match status" value="1"/>
</dbReference>
<dbReference type="NCBIfam" id="NF002636">
    <property type="entry name" value="PRK02304.1-5"/>
    <property type="match status" value="1"/>
</dbReference>
<dbReference type="PANTHER" id="PTHR32315">
    <property type="entry name" value="ADENINE PHOSPHORIBOSYLTRANSFERASE"/>
    <property type="match status" value="1"/>
</dbReference>
<dbReference type="PANTHER" id="PTHR32315:SF3">
    <property type="entry name" value="ADENINE PHOSPHORIBOSYLTRANSFERASE"/>
    <property type="match status" value="1"/>
</dbReference>
<dbReference type="Pfam" id="PF00156">
    <property type="entry name" value="Pribosyltran"/>
    <property type="match status" value="1"/>
</dbReference>
<dbReference type="SUPFAM" id="SSF53271">
    <property type="entry name" value="PRTase-like"/>
    <property type="match status" value="1"/>
</dbReference>
<dbReference type="PROSITE" id="PS00103">
    <property type="entry name" value="PUR_PYR_PR_TRANSFER"/>
    <property type="match status" value="1"/>
</dbReference>
<accession>A1WDB0</accession>
<sequence length="184" mass="20130">MTALSVNDYLRQHIRTVPDWPAPGVQFRDITPLLQNPKVFRVLIDAFVHRYMDRALRPDVVAGLDARGFILGAVVAYELNVGFVPIRKKGKLPFTTVEETYELEYGSATVELHADAVQPGDRVLLIDDLIATGGTMMAGKKLLEKLGATVMEGAAIVDLPELGGSERLRASGLPLYTLVDFSGH</sequence>
<evidence type="ECO:0000255" key="1">
    <source>
        <dbReference type="HAMAP-Rule" id="MF_00004"/>
    </source>
</evidence>
<reference key="1">
    <citation type="submission" date="2006-12" db="EMBL/GenBank/DDBJ databases">
        <title>Complete sequence of chromosome 1 of Acidovorax sp. JS42.</title>
        <authorList>
            <person name="Copeland A."/>
            <person name="Lucas S."/>
            <person name="Lapidus A."/>
            <person name="Barry K."/>
            <person name="Detter J.C."/>
            <person name="Glavina del Rio T."/>
            <person name="Dalin E."/>
            <person name="Tice H."/>
            <person name="Pitluck S."/>
            <person name="Chertkov O."/>
            <person name="Brettin T."/>
            <person name="Bruce D."/>
            <person name="Han C."/>
            <person name="Tapia R."/>
            <person name="Gilna P."/>
            <person name="Schmutz J."/>
            <person name="Larimer F."/>
            <person name="Land M."/>
            <person name="Hauser L."/>
            <person name="Kyrpides N."/>
            <person name="Kim E."/>
            <person name="Stahl D."/>
            <person name="Richardson P."/>
        </authorList>
    </citation>
    <scope>NUCLEOTIDE SEQUENCE [LARGE SCALE GENOMIC DNA]</scope>
    <source>
        <strain>JS42</strain>
    </source>
</reference>